<comment type="function">
    <text evidence="3">Involved in the transposition of the insertion sequence.</text>
</comment>
<comment type="similarity">
    <text evidence="3">Belongs to the transposase IS21/IS408/IS1162 family.</text>
</comment>
<comment type="sequence caution" evidence="3">
    <conflict type="erroneous initiation">
        <sequence resource="EMBL-CDS" id="AAA21540"/>
    </conflict>
</comment>
<gene>
    <name type="primary">tnpA</name>
</gene>
<keyword id="KW-0233">DNA recombination</keyword>
<keyword id="KW-0238">DNA-binding</keyword>
<keyword id="KW-0814">Transposable element</keyword>
<keyword id="KW-0815">Transposition</keyword>
<proteinExistence type="inferred from homology"/>
<reference key="1">
    <citation type="journal article" date="1994" name="J. Bacteriol.">
        <title>Insertional activation of cepA leads to high-level beta-lactamase expression in Bacteroides fragilis clinical isolates.</title>
        <authorList>
            <person name="Rogers M.B."/>
            <person name="Bennett T.K."/>
            <person name="Payne C.M."/>
            <person name="Smith C.J."/>
        </authorList>
    </citation>
    <scope>NUCLEOTIDE SEQUENCE [GENOMIC DNA]</scope>
    <source>
        <strain>RBF-103</strain>
    </source>
</reference>
<feature type="chain" id="PRO_0000075463" description="Transposase for insertion sequence element IS21-like">
    <location>
        <begin position="1"/>
        <end position="520"/>
    </location>
</feature>
<feature type="domain" description="HTH IS21-type" evidence="2">
    <location>
        <begin position="13"/>
        <end position="78"/>
    </location>
</feature>
<feature type="domain" description="Integrase catalytic" evidence="1">
    <location>
        <begin position="136"/>
        <end position="312"/>
    </location>
</feature>
<accession>Q45119</accession>
<sequence>METKSQNLKDKLYMWYKVRELQSKGLNKTQIGKYLGVDRSTVRRYLRTSREELFRKQNSHREYELKLGKYEEYVRGTLEEYPYISAARMHDWLKECYPDFPRVCDKTVFNFVDRIRRKYGIGKKSEVRIRRDYEKLPETPYGEYAQADFGEKWIPVKNGGSTKVYFFAIVLTRSRYKFIHFSRRPFDTELAIYAHELAFQYFGGRPEKIIYDQDRVLIARENLGDLILTGKFQSFIKEQHFQPVFCRRSDPESKGKVENVVKYVKENFLVARVLQDIPGLNEEARKWLERTGNGKVHGTTRLVPSEEFAVEKGYLKPYYGLPQPPQEQMKEYHVRKDNTVQYRGNYYSLPCGTYRSGQTRVWLQETEGYVELYSKETGKIVARHPLCTRKGKTIYDERHRRPKSIGAQKLAERILVYVSGNREVALWMENLKRKKERYYKDNLEVVLHMMPGYDKDILIEAVHICLDKGIYNGDSVKSLCEHVHRRRNKETETDRTDSCPPRQTGLIQSYNEIFHGYDKT</sequence>
<dbReference type="EMBL" id="U05888">
    <property type="protein sequence ID" value="AAA21540.1"/>
    <property type="status" value="ALT_INIT"/>
    <property type="molecule type" value="Genomic_DNA"/>
</dbReference>
<dbReference type="PIR" id="I40198">
    <property type="entry name" value="I40198"/>
</dbReference>
<dbReference type="SMR" id="Q45119"/>
<dbReference type="GO" id="GO:0003677">
    <property type="term" value="F:DNA binding"/>
    <property type="evidence" value="ECO:0007669"/>
    <property type="project" value="UniProtKB-KW"/>
</dbReference>
<dbReference type="GO" id="GO:0015074">
    <property type="term" value="P:DNA integration"/>
    <property type="evidence" value="ECO:0007669"/>
    <property type="project" value="InterPro"/>
</dbReference>
<dbReference type="GO" id="GO:0006310">
    <property type="term" value="P:DNA recombination"/>
    <property type="evidence" value="ECO:0007669"/>
    <property type="project" value="UniProtKB-KW"/>
</dbReference>
<dbReference type="GO" id="GO:0032196">
    <property type="term" value="P:transposition"/>
    <property type="evidence" value="ECO:0007669"/>
    <property type="project" value="UniProtKB-KW"/>
</dbReference>
<dbReference type="Gene3D" id="1.10.10.60">
    <property type="entry name" value="Homeodomain-like"/>
    <property type="match status" value="1"/>
</dbReference>
<dbReference type="Gene3D" id="3.30.420.10">
    <property type="entry name" value="Ribonuclease H-like superfamily/Ribonuclease H"/>
    <property type="match status" value="1"/>
</dbReference>
<dbReference type="InterPro" id="IPR009057">
    <property type="entry name" value="Homeodomain-like_sf"/>
</dbReference>
<dbReference type="InterPro" id="IPR017894">
    <property type="entry name" value="HTH_IS21_transposase_type"/>
</dbReference>
<dbReference type="InterPro" id="IPR001584">
    <property type="entry name" value="Integrase_cat-core"/>
</dbReference>
<dbReference type="InterPro" id="IPR054353">
    <property type="entry name" value="IstA-like_C"/>
</dbReference>
<dbReference type="InterPro" id="IPR012337">
    <property type="entry name" value="RNaseH-like_sf"/>
</dbReference>
<dbReference type="InterPro" id="IPR036397">
    <property type="entry name" value="RNaseH_sf"/>
</dbReference>
<dbReference type="NCBIfam" id="NF033546">
    <property type="entry name" value="transpos_IS21"/>
    <property type="match status" value="1"/>
</dbReference>
<dbReference type="PANTHER" id="PTHR35004:SF6">
    <property type="entry name" value="TRANSPOSASE"/>
    <property type="match status" value="1"/>
</dbReference>
<dbReference type="PANTHER" id="PTHR35004">
    <property type="entry name" value="TRANSPOSASE RV3428C-RELATED"/>
    <property type="match status" value="1"/>
</dbReference>
<dbReference type="Pfam" id="PF22483">
    <property type="entry name" value="Mu-transpos_C_2"/>
    <property type="match status" value="1"/>
</dbReference>
<dbReference type="Pfam" id="PF00665">
    <property type="entry name" value="rve"/>
    <property type="match status" value="1"/>
</dbReference>
<dbReference type="SUPFAM" id="SSF46689">
    <property type="entry name" value="Homeodomain-like"/>
    <property type="match status" value="1"/>
</dbReference>
<dbReference type="SUPFAM" id="SSF53098">
    <property type="entry name" value="Ribonuclease H-like"/>
    <property type="match status" value="1"/>
</dbReference>
<dbReference type="PROSITE" id="PS50531">
    <property type="entry name" value="HTH_IS21"/>
    <property type="match status" value="1"/>
</dbReference>
<dbReference type="PROSITE" id="PS50994">
    <property type="entry name" value="INTEGRASE"/>
    <property type="match status" value="1"/>
</dbReference>
<protein>
    <recommendedName>
        <fullName>Transposase for insertion sequence element IS21-like</fullName>
    </recommendedName>
</protein>
<name>TNPA_BACFG</name>
<evidence type="ECO:0000255" key="1">
    <source>
        <dbReference type="PROSITE-ProRule" id="PRU00457"/>
    </source>
</evidence>
<evidence type="ECO:0000255" key="2">
    <source>
        <dbReference type="PROSITE-ProRule" id="PRU00615"/>
    </source>
</evidence>
<evidence type="ECO:0000305" key="3"/>
<organism>
    <name type="scientific">Bacteroides fragilis</name>
    <dbReference type="NCBI Taxonomy" id="817"/>
    <lineage>
        <taxon>Bacteria</taxon>
        <taxon>Pseudomonadati</taxon>
        <taxon>Bacteroidota</taxon>
        <taxon>Bacteroidia</taxon>
        <taxon>Bacteroidales</taxon>
        <taxon>Bacteroidaceae</taxon>
        <taxon>Bacteroides</taxon>
    </lineage>
</organism>